<feature type="chain" id="PRO_0000205621" description="Tropomyosin alpha-1 chain">
    <location>
        <begin position="1"/>
        <end position="284"/>
    </location>
</feature>
<feature type="region of interest" description="Disordered" evidence="5">
    <location>
        <begin position="1"/>
        <end position="38"/>
    </location>
</feature>
<feature type="region of interest" description="Disordered" evidence="5">
    <location>
        <begin position="116"/>
        <end position="136"/>
    </location>
</feature>
<feature type="coiled-coil region" evidence="1">
    <location>
        <begin position="1"/>
        <end position="284"/>
    </location>
</feature>
<feature type="compositionally biased region" description="Basic and acidic residues" evidence="5">
    <location>
        <begin position="12"/>
        <end position="38"/>
    </location>
</feature>
<feature type="modified residue" description="N-acetylmethionine" evidence="4">
    <location>
        <position position="1"/>
    </location>
</feature>
<feature type="modified residue" description="Phosphoserine" evidence="3">
    <location>
        <position position="45"/>
    </location>
</feature>
<feature type="modified residue" description="Phosphoserine" evidence="9">
    <location>
        <position position="174"/>
    </location>
</feature>
<feature type="modified residue" description="Phosphoserine" evidence="9">
    <location>
        <position position="186"/>
    </location>
</feature>
<feature type="modified residue" description="Phosphoserine" evidence="9">
    <location>
        <position position="206"/>
    </location>
</feature>
<feature type="modified residue" description="Phosphoserine" evidence="9">
    <location>
        <position position="252"/>
    </location>
</feature>
<feature type="modified residue" description="Phosphotyrosine" evidence="3">
    <location>
        <position position="261"/>
    </location>
</feature>
<feature type="modified residue" description="Phosphoserine" evidence="9">
    <location>
        <position position="271"/>
    </location>
</feature>
<feature type="modified residue" description="Phosphoserine" evidence="9">
    <location>
        <position position="283"/>
    </location>
</feature>
<feature type="splice variant" id="VSP_006580" description="In isoform 2." evidence="7">
    <original>DELYAQKLKYKAISEELDHALNDMTSI</original>
    <variation>EKVAHAKEENLSMHQMLDQTLLELNNM</variation>
    <location>
        <begin position="258"/>
        <end position="284"/>
    </location>
</feature>
<keyword id="KW-0002">3D-structure</keyword>
<keyword id="KW-0007">Acetylation</keyword>
<keyword id="KW-0009">Actin-binding</keyword>
<keyword id="KW-0025">Alternative splicing</keyword>
<keyword id="KW-0175">Coiled coil</keyword>
<keyword id="KW-0963">Cytoplasm</keyword>
<keyword id="KW-0206">Cytoskeleton</keyword>
<keyword id="KW-0514">Muscle protein</keyword>
<keyword id="KW-0597">Phosphoprotein</keyword>
<keyword id="KW-1185">Reference proteome</keyword>
<evidence type="ECO:0000250" key="1"/>
<evidence type="ECO:0000250" key="2">
    <source>
        <dbReference type="UniProtKB" id="P04268"/>
    </source>
</evidence>
<evidence type="ECO:0000250" key="3">
    <source>
        <dbReference type="UniProtKB" id="P04692"/>
    </source>
</evidence>
<evidence type="ECO:0000250" key="4">
    <source>
        <dbReference type="UniProtKB" id="P09493"/>
    </source>
</evidence>
<evidence type="ECO:0000256" key="5">
    <source>
        <dbReference type="SAM" id="MobiDB-lite"/>
    </source>
</evidence>
<evidence type="ECO:0000269" key="6">
    <source>
    </source>
</evidence>
<evidence type="ECO:0000303" key="7">
    <source>
    </source>
</evidence>
<evidence type="ECO:0000305" key="8"/>
<evidence type="ECO:0007744" key="9">
    <source>
    </source>
</evidence>
<comment type="function">
    <text evidence="4">Binds to actin filaments in muscle and non-muscle cells. Plays a central role, in association with the troponin complex, in the calcium dependent regulation of vertebrate striated muscle contraction. Smooth muscle contraction is regulated by interaction with caldesmon. In non-muscle cells is implicated in stabilizing cytoskeleton actin filaments.</text>
</comment>
<comment type="subunit">
    <text evidence="2 3 4">Homodimer. Heterodimer of an alpha (TPM1, TPM3 or TPM4) and a beta (TPM2) chain. Interacts with HRG (via the HRR domain); the interaction contributes to the antiangiogenic properties of the histidine/proline-rich region (HRR) of HRG. Interacts (via N-terminus) with LMOD2 (via N-terminus) and TMOD1 (via N-terminus).</text>
</comment>
<comment type="interaction">
    <interactant intactId="EBI-298478">
        <id>P58771</id>
    </interactant>
    <interactant intactId="EBI-367540">
        <id>P68135</id>
        <label>ACTA1</label>
    </interactant>
    <organismsDiffer>true</organismsDiffer>
    <experiments>2</experiments>
</comment>
<comment type="subcellular location">
    <subcellularLocation>
        <location evidence="3">Cytoplasm</location>
        <location evidence="3">Cytoskeleton</location>
    </subcellularLocation>
    <text evidence="3">Associates with F-actin stress fibers.</text>
</comment>
<comment type="alternative products">
    <event type="alternative splicing"/>
    <isoform>
        <id>P58771-1</id>
        <name>1</name>
        <name>Skeletal muscle</name>
        <sequence type="displayed"/>
    </isoform>
    <isoform>
        <id>P58771-2</id>
        <name>2</name>
        <name>Fibroblast</name>
        <sequence type="described" ref="VSP_006580"/>
    </isoform>
    <text>Additional isoforms seem to exist.</text>
</comment>
<comment type="induction">
    <text evidence="6">Induced in stimulated quiescent cells.</text>
</comment>
<comment type="domain">
    <text>The molecule is in a coiled coil structure that is formed by 2 polypeptide chains. The sequence exhibits a prominent seven-residues periodicity.</text>
</comment>
<comment type="PTM">
    <text evidence="1">Phosphorylated at Ser-283 by DAPK1 in response to oxidative stress and this phosphorylation enhances stress fiber formation in endothelial cells.</text>
</comment>
<comment type="miscellaneous">
    <text>The sequences of cardiac and skeletal muscles are identical.</text>
</comment>
<comment type="similarity">
    <text evidence="8">Belongs to the tropomyosin family.</text>
</comment>
<proteinExistence type="evidence at protein level"/>
<name>TPM1_MOUSE</name>
<accession>P58771</accession>
<accession>P02558</accession>
<accession>P19354</accession>
<accession>P46902</accession>
<accession>P99034</accession>
<dbReference type="EMBL" id="X64831">
    <property type="protein sequence ID" value="CAA46043.1"/>
    <property type="molecule type" value="mRNA"/>
</dbReference>
<dbReference type="EMBL" id="M22479">
    <property type="protein sequence ID" value="AAA40483.1"/>
    <property type="molecule type" value="mRNA"/>
</dbReference>
<dbReference type="CCDS" id="CCDS23311.1">
    <molecule id="P58771-2"/>
</dbReference>
<dbReference type="CCDS" id="CCDS52845.1">
    <molecule id="P58771-1"/>
</dbReference>
<dbReference type="PIR" id="A31380">
    <property type="entry name" value="A60597"/>
</dbReference>
<dbReference type="RefSeq" id="NP_001157720.1">
    <molecule id="P58771-1"/>
    <property type="nucleotide sequence ID" value="NM_001164248.1"/>
</dbReference>
<dbReference type="RefSeq" id="NP_077745.2">
    <molecule id="P58771-2"/>
    <property type="nucleotide sequence ID" value="NM_024427.4"/>
</dbReference>
<dbReference type="PDB" id="7NEP">
    <property type="method" value="EM"/>
    <property type="resolution" value="10.20 A"/>
    <property type="chains" value="P/Q/T/U=11-261"/>
</dbReference>
<dbReference type="PDB" id="8Q4G">
    <property type="method" value="EM"/>
    <property type="resolution" value="8.00 A"/>
    <property type="chains" value="G/H=92-270"/>
</dbReference>
<dbReference type="PDB" id="8ZBK">
    <property type="method" value="EM"/>
    <property type="resolution" value="4.28 A"/>
    <property type="chains" value="R/S/T/U=93-270"/>
</dbReference>
<dbReference type="PDB" id="8ZBN">
    <property type="method" value="EM"/>
    <property type="resolution" value="3.02 A"/>
    <property type="chains" value="R/S/T/U=93-270"/>
</dbReference>
<dbReference type="PDBsum" id="7NEP"/>
<dbReference type="PDBsum" id="8Q4G"/>
<dbReference type="PDBsum" id="8ZBK"/>
<dbReference type="PDBsum" id="8ZBN"/>
<dbReference type="EMDB" id="EMD-12289"/>
<dbReference type="EMDB" id="EMD-18147"/>
<dbReference type="EMDB" id="EMD-39904"/>
<dbReference type="EMDB" id="EMD-39906"/>
<dbReference type="EMDB" id="EMD-6124"/>
<dbReference type="SMR" id="P58771"/>
<dbReference type="BioGRID" id="204291">
    <property type="interactions" value="117"/>
</dbReference>
<dbReference type="DIP" id="DIP-300N"/>
<dbReference type="FunCoup" id="P58771">
    <property type="interactions" value="605"/>
</dbReference>
<dbReference type="IntAct" id="P58771">
    <property type="interactions" value="108"/>
</dbReference>
<dbReference type="MINT" id="P58771"/>
<dbReference type="STRING" id="10090.ENSMUSP00000109337"/>
<dbReference type="GlyGen" id="P58771">
    <property type="glycosylation" value="1 site, 1 O-linked glycan (1 site)"/>
</dbReference>
<dbReference type="iPTMnet" id="P58771"/>
<dbReference type="PhosphoSitePlus" id="P58771"/>
<dbReference type="SwissPalm" id="P58771"/>
<dbReference type="CPTAC" id="non-CPTAC-3624"/>
<dbReference type="jPOST" id="P58771"/>
<dbReference type="PaxDb" id="10090-ENSMUSP00000109337"/>
<dbReference type="PeptideAtlas" id="P58771"/>
<dbReference type="ProteomicsDB" id="259060">
    <molecule id="P58771-1"/>
</dbReference>
<dbReference type="ProteomicsDB" id="259061">
    <molecule id="P58771-2"/>
</dbReference>
<dbReference type="Pumba" id="P58771"/>
<dbReference type="Antibodypedia" id="635">
    <property type="antibodies" value="333 antibodies from 39 providers"/>
</dbReference>
<dbReference type="DNASU" id="22003"/>
<dbReference type="Ensembl" id="ENSMUST00000113685.10">
    <molecule id="P58771-1"/>
    <property type="protein sequence ID" value="ENSMUSP00000109315.4"/>
    <property type="gene ID" value="ENSMUSG00000032366.16"/>
</dbReference>
<dbReference type="Ensembl" id="ENSMUST00000113707.9">
    <molecule id="P58771-2"/>
    <property type="protein sequence ID" value="ENSMUSP00000109337.3"/>
    <property type="gene ID" value="ENSMUSG00000032366.16"/>
</dbReference>
<dbReference type="GeneID" id="22003"/>
<dbReference type="KEGG" id="mmu:22003"/>
<dbReference type="UCSC" id="uc009qfq.2">
    <molecule id="P58771-1"/>
    <property type="organism name" value="mouse"/>
</dbReference>
<dbReference type="AGR" id="MGI:98809"/>
<dbReference type="CTD" id="7168"/>
<dbReference type="MGI" id="MGI:98809">
    <property type="gene designation" value="Tpm1"/>
</dbReference>
<dbReference type="VEuPathDB" id="HostDB:ENSMUSG00000032366"/>
<dbReference type="eggNOG" id="KOG1003">
    <property type="taxonomic scope" value="Eukaryota"/>
</dbReference>
<dbReference type="GeneTree" id="ENSGT01030000234542"/>
<dbReference type="HOGENOM" id="CLU_055027_0_0_1"/>
<dbReference type="InParanoid" id="P58771"/>
<dbReference type="PhylomeDB" id="P58771"/>
<dbReference type="TreeFam" id="TF351519"/>
<dbReference type="Reactome" id="R-MMU-390522">
    <property type="pathway name" value="Striated Muscle Contraction"/>
</dbReference>
<dbReference type="Reactome" id="R-MMU-445355">
    <property type="pathway name" value="Smooth Muscle Contraction"/>
</dbReference>
<dbReference type="BioGRID-ORCS" id="22003">
    <property type="hits" value="2 hits in 77 CRISPR screens"/>
</dbReference>
<dbReference type="CD-CODE" id="CE726F99">
    <property type="entry name" value="Postsynaptic density"/>
</dbReference>
<dbReference type="ChiTaRS" id="Tpm1">
    <property type="organism name" value="mouse"/>
</dbReference>
<dbReference type="PRO" id="PR:P58771"/>
<dbReference type="Proteomes" id="UP000000589">
    <property type="component" value="Chromosome 9"/>
</dbReference>
<dbReference type="RNAct" id="P58771">
    <property type="molecule type" value="protein"/>
</dbReference>
<dbReference type="Bgee" id="ENSMUSG00000032366">
    <property type="expression patterns" value="Expressed in tarsal region and 285 other cell types or tissues"/>
</dbReference>
<dbReference type="ExpressionAtlas" id="P58771">
    <property type="expression patterns" value="baseline and differential"/>
</dbReference>
<dbReference type="GO" id="GO:0015629">
    <property type="term" value="C:actin cytoskeleton"/>
    <property type="evidence" value="ECO:0000250"/>
    <property type="project" value="UniProtKB"/>
</dbReference>
<dbReference type="GO" id="GO:0005737">
    <property type="term" value="C:cytoplasm"/>
    <property type="evidence" value="ECO:0000314"/>
    <property type="project" value="MGI"/>
</dbReference>
<dbReference type="GO" id="GO:0005862">
    <property type="term" value="C:muscle thin filament tropomyosin"/>
    <property type="evidence" value="ECO:0000304"/>
    <property type="project" value="MGI"/>
</dbReference>
<dbReference type="GO" id="GO:0030016">
    <property type="term" value="C:myofibril"/>
    <property type="evidence" value="ECO:0000314"/>
    <property type="project" value="MGI"/>
</dbReference>
<dbReference type="GO" id="GO:0051015">
    <property type="term" value="F:actin filament binding"/>
    <property type="evidence" value="ECO:0000314"/>
    <property type="project" value="MGI"/>
</dbReference>
<dbReference type="GO" id="GO:0042802">
    <property type="term" value="F:identical protein binding"/>
    <property type="evidence" value="ECO:0000250"/>
    <property type="project" value="UniProtKB"/>
</dbReference>
<dbReference type="GO" id="GO:0046982">
    <property type="term" value="F:protein heterodimerization activity"/>
    <property type="evidence" value="ECO:0000250"/>
    <property type="project" value="UniProtKB"/>
</dbReference>
<dbReference type="GO" id="GO:0042803">
    <property type="term" value="F:protein homodimerization activity"/>
    <property type="evidence" value="ECO:0000250"/>
    <property type="project" value="UniProtKB"/>
</dbReference>
<dbReference type="GO" id="GO:0005200">
    <property type="term" value="F:structural constituent of cytoskeleton"/>
    <property type="evidence" value="ECO:0000304"/>
    <property type="project" value="MGI"/>
</dbReference>
<dbReference type="GO" id="GO:0060048">
    <property type="term" value="P:cardiac muscle contraction"/>
    <property type="evidence" value="ECO:0000315"/>
    <property type="project" value="BHF-UCL"/>
</dbReference>
<dbReference type="GO" id="GO:0001701">
    <property type="term" value="P:in utero embryonic development"/>
    <property type="evidence" value="ECO:0000315"/>
    <property type="project" value="MGI"/>
</dbReference>
<dbReference type="GO" id="GO:0003065">
    <property type="term" value="P:positive regulation of heart rate by epinephrine"/>
    <property type="evidence" value="ECO:0000315"/>
    <property type="project" value="BHF-UCL"/>
</dbReference>
<dbReference type="GO" id="GO:0055010">
    <property type="term" value="P:ventricular cardiac muscle tissue morphogenesis"/>
    <property type="evidence" value="ECO:0000315"/>
    <property type="project" value="BHF-UCL"/>
</dbReference>
<dbReference type="FunFam" id="1.20.5.1160:FF:000013">
    <property type="entry name" value="Tropomyosin 1 (alpha)"/>
    <property type="match status" value="1"/>
</dbReference>
<dbReference type="FunFam" id="1.20.5.170:FF:000005">
    <property type="entry name" value="Tropomyosin alpha-1 chain"/>
    <property type="match status" value="1"/>
</dbReference>
<dbReference type="FunFam" id="1.20.5.170:FF:000001">
    <property type="entry name" value="Tropomyosin alpha-1 chain isoform 1"/>
    <property type="match status" value="1"/>
</dbReference>
<dbReference type="FunFam" id="1.20.5.340:FF:000001">
    <property type="entry name" value="Tropomyosin alpha-1 chain isoform 2"/>
    <property type="match status" value="1"/>
</dbReference>
<dbReference type="Gene3D" id="1.20.5.170">
    <property type="match status" value="2"/>
</dbReference>
<dbReference type="Gene3D" id="1.20.5.340">
    <property type="match status" value="1"/>
</dbReference>
<dbReference type="InterPro" id="IPR000533">
    <property type="entry name" value="Tropomyosin"/>
</dbReference>
<dbReference type="PANTHER" id="PTHR19269">
    <property type="entry name" value="TROPOMYOSIN"/>
    <property type="match status" value="1"/>
</dbReference>
<dbReference type="Pfam" id="PF00261">
    <property type="entry name" value="Tropomyosin"/>
    <property type="match status" value="1"/>
</dbReference>
<dbReference type="PRINTS" id="PR00194">
    <property type="entry name" value="TROPOMYOSIN"/>
</dbReference>
<dbReference type="SUPFAM" id="SSF57997">
    <property type="entry name" value="Tropomyosin"/>
    <property type="match status" value="1"/>
</dbReference>
<dbReference type="PROSITE" id="PS00326">
    <property type="entry name" value="TROPOMYOSIN"/>
    <property type="match status" value="1"/>
</dbReference>
<organism>
    <name type="scientific">Mus musculus</name>
    <name type="common">Mouse</name>
    <dbReference type="NCBI Taxonomy" id="10090"/>
    <lineage>
        <taxon>Eukaryota</taxon>
        <taxon>Metazoa</taxon>
        <taxon>Chordata</taxon>
        <taxon>Craniata</taxon>
        <taxon>Vertebrata</taxon>
        <taxon>Euteleostomi</taxon>
        <taxon>Mammalia</taxon>
        <taxon>Eutheria</taxon>
        <taxon>Euarchontoglires</taxon>
        <taxon>Glires</taxon>
        <taxon>Rodentia</taxon>
        <taxon>Myomorpha</taxon>
        <taxon>Muroidea</taxon>
        <taxon>Muridae</taxon>
        <taxon>Murinae</taxon>
        <taxon>Mus</taxon>
        <taxon>Mus</taxon>
    </lineage>
</organism>
<reference key="1">
    <citation type="journal article" date="1994" name="Neuromuscul. Disord.">
        <title>Subtractive cDNA cloning as a tool to analyse secondary effects of a muscle disease. Characterization of affected genes in the myotonic ADR mouse.</title>
        <authorList>
            <person name="Schleef M."/>
            <person name="Zuehlke C."/>
            <person name="Schoeffl F."/>
            <person name="Jockusch H."/>
        </authorList>
    </citation>
    <scope>NUCLEOTIDE SEQUENCE [MRNA] (ISOFORM 1)</scope>
    <source>
        <strain>A2G</strain>
        <tissue>Fast-twitch skeletal muscle</tissue>
    </source>
</reference>
<reference key="2">
    <citation type="journal article" date="1988" name="Mol. Cell. Biol.">
        <title>Isolation and characterization of a cDNA that encodes mouse fibroblast tropomyosin isoform 2.</title>
        <authorList>
            <person name="Takenaga K."/>
            <person name="Nakamura Y."/>
            <person name="Tokunaga K."/>
            <person name="Kageyama H."/>
            <person name="Sakiyama S."/>
        </authorList>
    </citation>
    <scope>NUCLEOTIDE SEQUENCE [MRNA] (ISOFORM 2)</scope>
</reference>
<reference key="3">
    <citation type="journal article" date="1989" name="Exp. Cell Res.">
        <title>Coordinate induction of fibronectin, fibronectin receptor, tropomyosin, and actin genes in serum-stimulated fibroblasts.</title>
        <authorList>
            <person name="Ryseck R.P."/>
            <person name="MacDonald-Bravo H."/>
            <person name="Zerial M."/>
            <person name="Bravo R."/>
        </authorList>
    </citation>
    <scope>INDUCTION</scope>
</reference>
<reference key="4">
    <citation type="journal article" date="2007" name="Proc. Natl. Acad. Sci. U.S.A.">
        <title>Large-scale phosphorylation analysis of mouse liver.</title>
        <authorList>
            <person name="Villen J."/>
            <person name="Beausoleil S.A."/>
            <person name="Gerber S.A."/>
            <person name="Gygi S.P."/>
        </authorList>
    </citation>
    <scope>IDENTIFICATION BY MASS SPECTROMETRY [LARGE SCALE ANALYSIS]</scope>
    <source>
        <tissue>Liver</tissue>
    </source>
</reference>
<reference key="5">
    <citation type="journal article" date="2010" name="Cell">
        <title>A tissue-specific atlas of mouse protein phosphorylation and expression.</title>
        <authorList>
            <person name="Huttlin E.L."/>
            <person name="Jedrychowski M.P."/>
            <person name="Elias J.E."/>
            <person name="Goswami T."/>
            <person name="Rad R."/>
            <person name="Beausoleil S.A."/>
            <person name="Villen J."/>
            <person name="Haas W."/>
            <person name="Sowa M.E."/>
            <person name="Gygi S.P."/>
        </authorList>
    </citation>
    <scope>PHOSPHORYLATION [LARGE SCALE ANALYSIS] AT SER-174; SER-186; SER-206; SER-252; SER-271 AND SER-283</scope>
    <scope>IDENTIFICATION BY MASS SPECTROMETRY [LARGE SCALE ANALYSIS]</scope>
    <source>
        <tissue>Brain</tissue>
        <tissue>Brown adipose tissue</tissue>
        <tissue>Heart</tissue>
        <tissue>Kidney</tissue>
        <tissue>Lung</tissue>
        <tissue>Spleen</tissue>
        <tissue>Testis</tissue>
    </source>
</reference>
<protein>
    <recommendedName>
        <fullName>Tropomyosin alpha-1 chain</fullName>
    </recommendedName>
    <alternativeName>
        <fullName>Alpha-tropomyosin</fullName>
    </alternativeName>
    <alternativeName>
        <fullName>Tropomyosin-1</fullName>
    </alternativeName>
</protein>
<gene>
    <name type="primary">Tpm1</name>
    <name type="synonym">Tpm-1</name>
    <name type="synonym">Tpma</name>
</gene>
<sequence>MDAIKKKMQMLKLDKENALDRAEQAEADKKAAEDRSKQLEDELVSLQKKLKGTEDELDKYSEALKDAQEKLELAEKKATDAEADVASLNRRIQLVEEELDRAQERLATALQKLEEAEKAADESERGMKVIESRAQKDEEKMEIQEIQLKEAKHIAEDADRKYEEVARKLVIIESDLERAEERAELSEGKCAELEEELKTVTNNLKSLEAQAEKYSQKEDKYEEEIKVLSDKLKEAETRAEFAERSVTKLEKSIDDLEDELYAQKLKYKAISEELDHALNDMTSI</sequence>